<comment type="function">
    <text evidence="1">Involved in the maturation of [NiFe] hydrogenases. Required for nickel insertion into the metal center of the hydrogenase.</text>
</comment>
<comment type="similarity">
    <text evidence="1">Belongs to the HypA/HybF family.</text>
</comment>
<evidence type="ECO:0000255" key="1">
    <source>
        <dbReference type="HAMAP-Rule" id="MF_00213"/>
    </source>
</evidence>
<reference key="1">
    <citation type="journal article" date="2007" name="ISME J.">
        <title>Population level functional diversity in a microbial community revealed by comparative genomic and metagenomic analyses.</title>
        <authorList>
            <person name="Bhaya D."/>
            <person name="Grossman A.R."/>
            <person name="Steunou A.-S."/>
            <person name="Khuri N."/>
            <person name="Cohan F.M."/>
            <person name="Hamamura N."/>
            <person name="Melendrez M.C."/>
            <person name="Bateson M.M."/>
            <person name="Ward D.M."/>
            <person name="Heidelberg J.F."/>
        </authorList>
    </citation>
    <scope>NUCLEOTIDE SEQUENCE [LARGE SCALE GENOMIC DNA]</scope>
    <source>
        <strain>JA-2-3B'a(2-13)</strain>
    </source>
</reference>
<gene>
    <name evidence="1" type="primary">hypA</name>
    <name type="ordered locus">CYB_2545</name>
</gene>
<feature type="chain" id="PRO_1000023861" description="Hydrogenase maturation factor HypA">
    <location>
        <begin position="1"/>
        <end position="132"/>
    </location>
</feature>
<feature type="binding site" evidence="1">
    <location>
        <position position="2"/>
    </location>
    <ligand>
        <name>Ni(2+)</name>
        <dbReference type="ChEBI" id="CHEBI:49786"/>
    </ligand>
</feature>
<feature type="binding site" evidence="1">
    <location>
        <position position="74"/>
    </location>
    <ligand>
        <name>Zn(2+)</name>
        <dbReference type="ChEBI" id="CHEBI:29105"/>
    </ligand>
</feature>
<feature type="binding site" evidence="1">
    <location>
        <position position="77"/>
    </location>
    <ligand>
        <name>Zn(2+)</name>
        <dbReference type="ChEBI" id="CHEBI:29105"/>
    </ligand>
</feature>
<feature type="binding site" evidence="1">
    <location>
        <position position="91"/>
    </location>
    <ligand>
        <name>Zn(2+)</name>
        <dbReference type="ChEBI" id="CHEBI:29105"/>
    </ligand>
</feature>
<feature type="binding site" evidence="1">
    <location>
        <position position="94"/>
    </location>
    <ligand>
        <name>Zn(2+)</name>
        <dbReference type="ChEBI" id="CHEBI:29105"/>
    </ligand>
</feature>
<sequence length="132" mass="14935">MHETDMTRALIQTLRDWWQSQPGQPQIARVHLVVGQFTCVEPASLTFAYAAQTQGTFLQGSQLVIRETPLIAYCHPCGQEYKPEIGRRYACPNCGSPMEEIRSGRELKIDYIEIDYIECSTNFTPPAQPEVA</sequence>
<name>HYPA_SYNJB</name>
<dbReference type="EMBL" id="CP000240">
    <property type="protein sequence ID" value="ABD03479.1"/>
    <property type="molecule type" value="Genomic_DNA"/>
</dbReference>
<dbReference type="RefSeq" id="WP_011434106.1">
    <property type="nucleotide sequence ID" value="NC_007776.1"/>
</dbReference>
<dbReference type="SMR" id="Q2JIR9"/>
<dbReference type="STRING" id="321332.CYB_2545"/>
<dbReference type="KEGG" id="cyb:CYB_2545"/>
<dbReference type="eggNOG" id="COG0375">
    <property type="taxonomic scope" value="Bacteria"/>
</dbReference>
<dbReference type="HOGENOM" id="CLU_126929_4_1_3"/>
<dbReference type="OrthoDB" id="9800361at2"/>
<dbReference type="Proteomes" id="UP000001938">
    <property type="component" value="Chromosome"/>
</dbReference>
<dbReference type="GO" id="GO:0016151">
    <property type="term" value="F:nickel cation binding"/>
    <property type="evidence" value="ECO:0007669"/>
    <property type="project" value="UniProtKB-UniRule"/>
</dbReference>
<dbReference type="GO" id="GO:0008270">
    <property type="term" value="F:zinc ion binding"/>
    <property type="evidence" value="ECO:0007669"/>
    <property type="project" value="UniProtKB-UniRule"/>
</dbReference>
<dbReference type="GO" id="GO:0051604">
    <property type="term" value="P:protein maturation"/>
    <property type="evidence" value="ECO:0007669"/>
    <property type="project" value="InterPro"/>
</dbReference>
<dbReference type="GO" id="GO:0036211">
    <property type="term" value="P:protein modification process"/>
    <property type="evidence" value="ECO:0007669"/>
    <property type="project" value="UniProtKB-UniRule"/>
</dbReference>
<dbReference type="Gene3D" id="3.30.2320.80">
    <property type="match status" value="1"/>
</dbReference>
<dbReference type="HAMAP" id="MF_00213">
    <property type="entry name" value="HypA_HybF"/>
    <property type="match status" value="1"/>
</dbReference>
<dbReference type="InterPro" id="IPR000688">
    <property type="entry name" value="HypA/HybF"/>
</dbReference>
<dbReference type="NCBIfam" id="TIGR00100">
    <property type="entry name" value="hypA"/>
    <property type="match status" value="1"/>
</dbReference>
<dbReference type="PANTHER" id="PTHR34535">
    <property type="entry name" value="HYDROGENASE MATURATION FACTOR HYPA"/>
    <property type="match status" value="1"/>
</dbReference>
<dbReference type="PANTHER" id="PTHR34535:SF3">
    <property type="entry name" value="HYDROGENASE MATURATION FACTOR HYPA"/>
    <property type="match status" value="1"/>
</dbReference>
<dbReference type="Pfam" id="PF01155">
    <property type="entry name" value="HypA"/>
    <property type="match status" value="1"/>
</dbReference>
<dbReference type="PIRSF" id="PIRSF004761">
    <property type="entry name" value="Hydrgn_mat_HypA"/>
    <property type="match status" value="1"/>
</dbReference>
<keyword id="KW-0479">Metal-binding</keyword>
<keyword id="KW-0533">Nickel</keyword>
<keyword id="KW-1185">Reference proteome</keyword>
<keyword id="KW-0862">Zinc</keyword>
<proteinExistence type="inferred from homology"/>
<organism>
    <name type="scientific">Synechococcus sp. (strain JA-2-3B'a(2-13))</name>
    <name type="common">Cyanobacteria bacterium Yellowstone B-Prime</name>
    <dbReference type="NCBI Taxonomy" id="321332"/>
    <lineage>
        <taxon>Bacteria</taxon>
        <taxon>Bacillati</taxon>
        <taxon>Cyanobacteriota</taxon>
        <taxon>Cyanophyceae</taxon>
        <taxon>Synechococcales</taxon>
        <taxon>Synechococcaceae</taxon>
        <taxon>Synechococcus</taxon>
    </lineage>
</organism>
<accession>Q2JIR9</accession>
<protein>
    <recommendedName>
        <fullName evidence="1">Hydrogenase maturation factor HypA</fullName>
    </recommendedName>
</protein>